<comment type="function">
    <text evidence="1">Activates KDO (a required 8-carbon sugar) for incorporation into bacterial lipopolysaccharide in Gram-negative bacteria.</text>
</comment>
<comment type="catalytic activity">
    <reaction evidence="1">
        <text>3-deoxy-alpha-D-manno-oct-2-ulosonate + CTP = CMP-3-deoxy-beta-D-manno-octulosonate + diphosphate</text>
        <dbReference type="Rhea" id="RHEA:23448"/>
        <dbReference type="ChEBI" id="CHEBI:33019"/>
        <dbReference type="ChEBI" id="CHEBI:37563"/>
        <dbReference type="ChEBI" id="CHEBI:85986"/>
        <dbReference type="ChEBI" id="CHEBI:85987"/>
        <dbReference type="EC" id="2.7.7.38"/>
    </reaction>
</comment>
<comment type="pathway">
    <text evidence="1">Nucleotide-sugar biosynthesis; CMP-3-deoxy-D-manno-octulosonate biosynthesis; CMP-3-deoxy-D-manno-octulosonate from 3-deoxy-D-manno-octulosonate and CTP: step 1/1.</text>
</comment>
<comment type="pathway">
    <text evidence="1">Bacterial outer membrane biogenesis; lipopolysaccharide biosynthesis.</text>
</comment>
<comment type="subcellular location">
    <subcellularLocation>
        <location evidence="1">Cytoplasm</location>
    </subcellularLocation>
</comment>
<comment type="similarity">
    <text evidence="1">Belongs to the KdsB family.</text>
</comment>
<feature type="chain" id="PRO_0000369994" description="3-deoxy-manno-octulosonate cytidylyltransferase">
    <location>
        <begin position="1"/>
        <end position="259"/>
    </location>
</feature>
<gene>
    <name evidence="1" type="primary">kdsB</name>
    <name type="ordered locus">Mlg_1433</name>
</gene>
<organism>
    <name type="scientific">Alkalilimnicola ehrlichii (strain ATCC BAA-1101 / DSM 17681 / MLHE-1)</name>
    <dbReference type="NCBI Taxonomy" id="187272"/>
    <lineage>
        <taxon>Bacteria</taxon>
        <taxon>Pseudomonadati</taxon>
        <taxon>Pseudomonadota</taxon>
        <taxon>Gammaproteobacteria</taxon>
        <taxon>Chromatiales</taxon>
        <taxon>Ectothiorhodospiraceae</taxon>
        <taxon>Alkalilimnicola</taxon>
    </lineage>
</organism>
<keyword id="KW-0963">Cytoplasm</keyword>
<keyword id="KW-0448">Lipopolysaccharide biosynthesis</keyword>
<keyword id="KW-0548">Nucleotidyltransferase</keyword>
<keyword id="KW-1185">Reference proteome</keyword>
<keyword id="KW-0808">Transferase</keyword>
<sequence>MTTPFTVIIPARYASHRFPGKPLASLLGWPMIHHVCRRAEESGAARILVATDHREIAHACREEGREVVMTRHDHPSGTDRLAEVAERLGLDDDQIVVNLQGDEPLMPGRLVRQVALDLAAHRDAGIATLATLCHSLDEVRSPHAVKVVRDRQGYALYFSRAPIPWDRDGFSGAAGAARSPGQWLRHLGLYAYRVGFLRRYPALEAAPPEGLEALEQLRALWHGVRIHVGLAHQVPGPGVDTPQDLAQVERLLAEQGPPA</sequence>
<reference key="1">
    <citation type="submission" date="2006-08" db="EMBL/GenBank/DDBJ databases">
        <title>Complete sequence of Alkalilimnicola ehrilichei MLHE-1.</title>
        <authorList>
            <person name="Copeland A."/>
            <person name="Lucas S."/>
            <person name="Lapidus A."/>
            <person name="Barry K."/>
            <person name="Detter J.C."/>
            <person name="Glavina del Rio T."/>
            <person name="Hammon N."/>
            <person name="Israni S."/>
            <person name="Dalin E."/>
            <person name="Tice H."/>
            <person name="Pitluck S."/>
            <person name="Sims D."/>
            <person name="Brettin T."/>
            <person name="Bruce D."/>
            <person name="Han C."/>
            <person name="Tapia R."/>
            <person name="Gilna P."/>
            <person name="Schmutz J."/>
            <person name="Larimer F."/>
            <person name="Land M."/>
            <person name="Hauser L."/>
            <person name="Kyrpides N."/>
            <person name="Mikhailova N."/>
            <person name="Oremland R.S."/>
            <person name="Hoeft S.E."/>
            <person name="Switzer-Blum J."/>
            <person name="Kulp T."/>
            <person name="King G."/>
            <person name="Tabita R."/>
            <person name="Witte B."/>
            <person name="Santini J.M."/>
            <person name="Basu P."/>
            <person name="Hollibaugh J.T."/>
            <person name="Xie G."/>
            <person name="Stolz J.F."/>
            <person name="Richardson P."/>
        </authorList>
    </citation>
    <scope>NUCLEOTIDE SEQUENCE [LARGE SCALE GENOMIC DNA]</scope>
    <source>
        <strain>ATCC BAA-1101 / DSM 17681 / MLHE-1</strain>
    </source>
</reference>
<dbReference type="EC" id="2.7.7.38" evidence="1"/>
<dbReference type="EMBL" id="CP000453">
    <property type="protein sequence ID" value="ABI56782.1"/>
    <property type="molecule type" value="Genomic_DNA"/>
</dbReference>
<dbReference type="RefSeq" id="WP_011629177.1">
    <property type="nucleotide sequence ID" value="NC_008340.1"/>
</dbReference>
<dbReference type="SMR" id="Q0A8Q5"/>
<dbReference type="KEGG" id="aeh:Mlg_1433"/>
<dbReference type="eggNOG" id="COG1212">
    <property type="taxonomic scope" value="Bacteria"/>
</dbReference>
<dbReference type="HOGENOM" id="CLU_065038_1_0_6"/>
<dbReference type="OrthoDB" id="9815559at2"/>
<dbReference type="UniPathway" id="UPA00030"/>
<dbReference type="UniPathway" id="UPA00358">
    <property type="reaction ID" value="UER00476"/>
</dbReference>
<dbReference type="Proteomes" id="UP000001962">
    <property type="component" value="Chromosome"/>
</dbReference>
<dbReference type="GO" id="GO:0005829">
    <property type="term" value="C:cytosol"/>
    <property type="evidence" value="ECO:0007669"/>
    <property type="project" value="TreeGrafter"/>
</dbReference>
<dbReference type="GO" id="GO:0008690">
    <property type="term" value="F:3-deoxy-manno-octulosonate cytidylyltransferase activity"/>
    <property type="evidence" value="ECO:0007669"/>
    <property type="project" value="UniProtKB-UniRule"/>
</dbReference>
<dbReference type="GO" id="GO:0033468">
    <property type="term" value="P:CMP-keto-3-deoxy-D-manno-octulosonic acid biosynthetic process"/>
    <property type="evidence" value="ECO:0007669"/>
    <property type="project" value="UniProtKB-UniRule"/>
</dbReference>
<dbReference type="GO" id="GO:0009103">
    <property type="term" value="P:lipopolysaccharide biosynthetic process"/>
    <property type="evidence" value="ECO:0007669"/>
    <property type="project" value="UniProtKB-UniRule"/>
</dbReference>
<dbReference type="CDD" id="cd02517">
    <property type="entry name" value="CMP-KDO-Synthetase"/>
    <property type="match status" value="1"/>
</dbReference>
<dbReference type="FunFam" id="3.90.550.10:FF:000011">
    <property type="entry name" value="3-deoxy-manno-octulosonate cytidylyltransferase"/>
    <property type="match status" value="1"/>
</dbReference>
<dbReference type="Gene3D" id="3.90.550.10">
    <property type="entry name" value="Spore Coat Polysaccharide Biosynthesis Protein SpsA, Chain A"/>
    <property type="match status" value="1"/>
</dbReference>
<dbReference type="HAMAP" id="MF_00057">
    <property type="entry name" value="KdsB"/>
    <property type="match status" value="1"/>
</dbReference>
<dbReference type="InterPro" id="IPR003329">
    <property type="entry name" value="Cytidylyl_trans"/>
</dbReference>
<dbReference type="InterPro" id="IPR004528">
    <property type="entry name" value="KdsB"/>
</dbReference>
<dbReference type="InterPro" id="IPR029044">
    <property type="entry name" value="Nucleotide-diphossugar_trans"/>
</dbReference>
<dbReference type="NCBIfam" id="TIGR00466">
    <property type="entry name" value="kdsB"/>
    <property type="match status" value="1"/>
</dbReference>
<dbReference type="NCBIfam" id="NF003950">
    <property type="entry name" value="PRK05450.1-3"/>
    <property type="match status" value="1"/>
</dbReference>
<dbReference type="NCBIfam" id="NF003952">
    <property type="entry name" value="PRK05450.1-5"/>
    <property type="match status" value="1"/>
</dbReference>
<dbReference type="PANTHER" id="PTHR42866">
    <property type="entry name" value="3-DEOXY-MANNO-OCTULOSONATE CYTIDYLYLTRANSFERASE"/>
    <property type="match status" value="1"/>
</dbReference>
<dbReference type="PANTHER" id="PTHR42866:SF2">
    <property type="entry name" value="3-DEOXY-MANNO-OCTULOSONATE CYTIDYLYLTRANSFERASE, MITOCHONDRIAL"/>
    <property type="match status" value="1"/>
</dbReference>
<dbReference type="Pfam" id="PF02348">
    <property type="entry name" value="CTP_transf_3"/>
    <property type="match status" value="1"/>
</dbReference>
<dbReference type="SUPFAM" id="SSF53448">
    <property type="entry name" value="Nucleotide-diphospho-sugar transferases"/>
    <property type="match status" value="1"/>
</dbReference>
<name>KDSB_ALKEH</name>
<accession>Q0A8Q5</accession>
<protein>
    <recommendedName>
        <fullName evidence="1">3-deoxy-manno-octulosonate cytidylyltransferase</fullName>
        <ecNumber evidence="1">2.7.7.38</ecNumber>
    </recommendedName>
    <alternativeName>
        <fullName evidence="1">CMP-2-keto-3-deoxyoctulosonic acid synthase</fullName>
        <shortName evidence="1">CKS</shortName>
        <shortName evidence="1">CMP-KDO synthase</shortName>
    </alternativeName>
</protein>
<proteinExistence type="inferred from homology"/>
<evidence type="ECO:0000255" key="1">
    <source>
        <dbReference type="HAMAP-Rule" id="MF_00057"/>
    </source>
</evidence>